<sequence length="144" mass="16729">MAFTFAAFCYMLALLLTATLIFFAIWHIIAFDELKTDYKNPIDQCNTLNPLVLPEYLIHAFFCVMFLCAAEWLTLGLNMPLLAYHIWRYMSRPVMSGPGLYDPTTIMNADILAYCQKEGWCKLAFYLLAFFYYLYGMIYVLVSS</sequence>
<feature type="chain" id="PRO_0000122224" description="Protein cornichon homolog 1">
    <location>
        <begin position="1"/>
        <end position="144"/>
    </location>
</feature>
<feature type="topological domain" description="Cytoplasmic" evidence="2">
    <location>
        <begin position="1"/>
        <end position="10"/>
    </location>
</feature>
<feature type="transmembrane region" description="Helical" evidence="2">
    <location>
        <begin position="11"/>
        <end position="31"/>
    </location>
</feature>
<feature type="topological domain" description="Lumenal" evidence="2">
    <location>
        <begin position="32"/>
        <end position="56"/>
    </location>
</feature>
<feature type="transmembrane region" description="Helical" evidence="2">
    <location>
        <begin position="57"/>
        <end position="77"/>
    </location>
</feature>
<feature type="topological domain" description="Cytoplasmic" evidence="2">
    <location>
        <begin position="78"/>
        <end position="122"/>
    </location>
</feature>
<feature type="transmembrane region" description="Helical" evidence="2">
    <location>
        <begin position="123"/>
        <end position="143"/>
    </location>
</feature>
<feature type="topological domain" description="Lumenal" evidence="2">
    <location>
        <position position="144"/>
    </location>
</feature>
<comment type="function">
    <text evidence="1">Involved in the selective transport and maturation of TGF-alpha family proteins.</text>
</comment>
<comment type="subunit">
    <text evidence="1">Interacts with AREG immature precursor and with immature TGFA, i.e. with a prosegment and lacking full N-glycosylation, but not with the fully N-glycosylated form. In the Golgi apparatus, may form a complex with GORASP55 and transmembrane TGFA (By similarity).</text>
</comment>
<comment type="subcellular location">
    <subcellularLocation>
        <location>Endoplasmic reticulum membrane</location>
        <topology>Multi-pass membrane protein</topology>
    </subcellularLocation>
    <subcellularLocation>
        <location>Golgi apparatus membrane</location>
    </subcellularLocation>
    <text evidence="1">Located primarily in the ER; may cycle between the ER and the Golgi apparatus.</text>
</comment>
<comment type="similarity">
    <text evidence="3">Belongs to the cornichon family.</text>
</comment>
<name>CNIH1_PONAB</name>
<reference key="1">
    <citation type="submission" date="2004-11" db="EMBL/GenBank/DDBJ databases">
        <authorList>
            <consortium name="The German cDNA consortium"/>
        </authorList>
    </citation>
    <scope>NUCLEOTIDE SEQUENCE [LARGE SCALE MRNA]</scope>
    <source>
        <tissue>Kidney</tissue>
    </source>
</reference>
<keyword id="KW-0256">Endoplasmic reticulum</keyword>
<keyword id="KW-0931">ER-Golgi transport</keyword>
<keyword id="KW-0333">Golgi apparatus</keyword>
<keyword id="KW-0472">Membrane</keyword>
<keyword id="KW-1185">Reference proteome</keyword>
<keyword id="KW-0812">Transmembrane</keyword>
<keyword id="KW-1133">Transmembrane helix</keyword>
<keyword id="KW-0813">Transport</keyword>
<proteinExistence type="evidence at transcript level"/>
<evidence type="ECO:0000250" key="1"/>
<evidence type="ECO:0000255" key="2"/>
<evidence type="ECO:0000305" key="3"/>
<gene>
    <name type="primary">CNIH1</name>
    <name type="synonym">CNIH</name>
</gene>
<accession>Q5RDB5</accession>
<dbReference type="EMBL" id="CR857999">
    <property type="protein sequence ID" value="CAH90242.1"/>
    <property type="molecule type" value="mRNA"/>
</dbReference>
<dbReference type="RefSeq" id="NP_001125104.1">
    <property type="nucleotide sequence ID" value="NM_001131632.2"/>
</dbReference>
<dbReference type="SMR" id="Q5RDB5"/>
<dbReference type="STRING" id="9601.ENSPPYP00000006623"/>
<dbReference type="GeneID" id="100171986"/>
<dbReference type="KEGG" id="pon:100171986"/>
<dbReference type="CTD" id="10175"/>
<dbReference type="eggNOG" id="KOG2729">
    <property type="taxonomic scope" value="Eukaryota"/>
</dbReference>
<dbReference type="InParanoid" id="Q5RDB5"/>
<dbReference type="OrthoDB" id="434393at2759"/>
<dbReference type="Proteomes" id="UP000001595">
    <property type="component" value="Unplaced"/>
</dbReference>
<dbReference type="GO" id="GO:0005789">
    <property type="term" value="C:endoplasmic reticulum membrane"/>
    <property type="evidence" value="ECO:0007669"/>
    <property type="project" value="UniProtKB-SubCell"/>
</dbReference>
<dbReference type="GO" id="GO:0000139">
    <property type="term" value="C:Golgi membrane"/>
    <property type="evidence" value="ECO:0007669"/>
    <property type="project" value="UniProtKB-SubCell"/>
</dbReference>
<dbReference type="GO" id="GO:0016192">
    <property type="term" value="P:vesicle-mediated transport"/>
    <property type="evidence" value="ECO:0007669"/>
    <property type="project" value="UniProtKB-KW"/>
</dbReference>
<dbReference type="InterPro" id="IPR003377">
    <property type="entry name" value="Cornichon"/>
</dbReference>
<dbReference type="InterPro" id="IPR033466">
    <property type="entry name" value="Cornichon_conserved"/>
</dbReference>
<dbReference type="PANTHER" id="PTHR12290">
    <property type="entry name" value="CORNICHON-RELATED"/>
    <property type="match status" value="1"/>
</dbReference>
<dbReference type="Pfam" id="PF03311">
    <property type="entry name" value="Cornichon"/>
    <property type="match status" value="1"/>
</dbReference>
<dbReference type="SMART" id="SM01398">
    <property type="entry name" value="Cornichon"/>
    <property type="match status" value="1"/>
</dbReference>
<dbReference type="PROSITE" id="PS01340">
    <property type="entry name" value="CORNICHON"/>
    <property type="match status" value="1"/>
</dbReference>
<protein>
    <recommendedName>
        <fullName>Protein cornichon homolog 1</fullName>
        <shortName>CNIH-1</shortName>
    </recommendedName>
    <alternativeName>
        <fullName>Cornichon family AMPA receptor auxiliary protein 1</fullName>
    </alternativeName>
    <alternativeName>
        <fullName>Protein cornichon homolog</fullName>
    </alternativeName>
</protein>
<organism>
    <name type="scientific">Pongo abelii</name>
    <name type="common">Sumatran orangutan</name>
    <name type="synonym">Pongo pygmaeus abelii</name>
    <dbReference type="NCBI Taxonomy" id="9601"/>
    <lineage>
        <taxon>Eukaryota</taxon>
        <taxon>Metazoa</taxon>
        <taxon>Chordata</taxon>
        <taxon>Craniata</taxon>
        <taxon>Vertebrata</taxon>
        <taxon>Euteleostomi</taxon>
        <taxon>Mammalia</taxon>
        <taxon>Eutheria</taxon>
        <taxon>Euarchontoglires</taxon>
        <taxon>Primates</taxon>
        <taxon>Haplorrhini</taxon>
        <taxon>Catarrhini</taxon>
        <taxon>Hominidae</taxon>
        <taxon>Pongo</taxon>
    </lineage>
</organism>